<evidence type="ECO:0000250" key="1"/>
<evidence type="ECO:0000305" key="2"/>
<reference key="1">
    <citation type="submission" date="1998-02" db="EMBL/GenBank/DDBJ databases">
        <title>Pseudomonas oprX and fur have overlapping transcripts: oprX encodes an outer membrane lipoprotein essential for cell envelope integrity.</title>
        <authorList>
            <person name="Ochsner U.O."/>
            <person name="Vasil A.I."/>
            <person name="Johnson Z."/>
            <person name="Vasil M.L."/>
        </authorList>
    </citation>
    <scope>NUCLEOTIDE SEQUENCE [GENOMIC DNA]</scope>
    <source>
        <strain>ATCC 15692 / DSM 22644 / CIP 104116 / JCM 14847 / LMG 12228 / 1C / PRS 101 / PAO1</strain>
    </source>
</reference>
<reference key="2">
    <citation type="journal article" date="2000" name="Nature">
        <title>Complete genome sequence of Pseudomonas aeruginosa PAO1, an opportunistic pathogen.</title>
        <authorList>
            <person name="Stover C.K."/>
            <person name="Pham X.-Q.T."/>
            <person name="Erwin A.L."/>
            <person name="Mizoguchi S.D."/>
            <person name="Warrener P."/>
            <person name="Hickey M.J."/>
            <person name="Brinkman F.S.L."/>
            <person name="Hufnagle W.O."/>
            <person name="Kowalik D.J."/>
            <person name="Lagrou M."/>
            <person name="Garber R.L."/>
            <person name="Goltry L."/>
            <person name="Tolentino E."/>
            <person name="Westbrock-Wadman S."/>
            <person name="Yuan Y."/>
            <person name="Brody L.L."/>
            <person name="Coulter S.N."/>
            <person name="Folger K.R."/>
            <person name="Kas A."/>
            <person name="Larbig K."/>
            <person name="Lim R.M."/>
            <person name="Smith K.A."/>
            <person name="Spencer D.H."/>
            <person name="Wong G.K.-S."/>
            <person name="Wu Z."/>
            <person name="Paulsen I.T."/>
            <person name="Reizer J."/>
            <person name="Saier M.H. Jr."/>
            <person name="Hancock R.E.W."/>
            <person name="Lory S."/>
            <person name="Olson M.V."/>
        </authorList>
    </citation>
    <scope>NUCLEOTIDE SEQUENCE [LARGE SCALE GENOMIC DNA]</scope>
    <source>
        <strain>ATCC 15692 / DSM 22644 / CIP 104116 / JCM 14847 / LMG 12228 / 1C / PRS 101 / PAO1</strain>
    </source>
</reference>
<protein>
    <recommendedName>
        <fullName>Ribosome association toxin RatA</fullName>
    </recommendedName>
</protein>
<comment type="function">
    <text evidence="1">Toxic component of a type II toxin-antitoxin (TA) system. Binds to 50S ribosomal subunits, preventing them from associating with 30S subunits to form 70S ribosomes. Its antitoxin is unknown (By similarity).</text>
</comment>
<comment type="similarity">
    <text evidence="2">Belongs to the ribosome association toxin RatA family.</text>
</comment>
<name>RATA_PSEAE</name>
<dbReference type="EMBL" id="AF050676">
    <property type="protein sequence ID" value="AAC05676.1"/>
    <property type="molecule type" value="Genomic_DNA"/>
</dbReference>
<dbReference type="EMBL" id="AE004091">
    <property type="protein sequence ID" value="AAG08153.1"/>
    <property type="molecule type" value="Genomic_DNA"/>
</dbReference>
<dbReference type="PIR" id="C83050">
    <property type="entry name" value="C83050"/>
</dbReference>
<dbReference type="RefSeq" id="NP_253455.1">
    <property type="nucleotide sequence ID" value="NC_002516.2"/>
</dbReference>
<dbReference type="RefSeq" id="WP_003100497.1">
    <property type="nucleotide sequence ID" value="NZ_QZGE01000018.1"/>
</dbReference>
<dbReference type="SMR" id="O68560"/>
<dbReference type="FunCoup" id="O68560">
    <property type="interactions" value="282"/>
</dbReference>
<dbReference type="STRING" id="208964.PA4767"/>
<dbReference type="PaxDb" id="208964-PA4767"/>
<dbReference type="GeneID" id="881791"/>
<dbReference type="KEGG" id="pae:PA4767"/>
<dbReference type="PATRIC" id="fig|208964.12.peg.4994"/>
<dbReference type="PseudoCAP" id="PA4767"/>
<dbReference type="HOGENOM" id="CLU_079653_3_1_6"/>
<dbReference type="InParanoid" id="O68560"/>
<dbReference type="OrthoDB" id="9804759at2"/>
<dbReference type="PhylomeDB" id="O68560"/>
<dbReference type="BioCyc" id="PAER208964:G1FZ6-4880-MONOMER"/>
<dbReference type="Proteomes" id="UP000002438">
    <property type="component" value="Chromosome"/>
</dbReference>
<dbReference type="GO" id="GO:0048039">
    <property type="term" value="F:ubiquinone binding"/>
    <property type="evidence" value="ECO:0007669"/>
    <property type="project" value="InterPro"/>
</dbReference>
<dbReference type="GO" id="GO:0045333">
    <property type="term" value="P:cellular respiration"/>
    <property type="evidence" value="ECO:0007669"/>
    <property type="project" value="InterPro"/>
</dbReference>
<dbReference type="CDD" id="cd07813">
    <property type="entry name" value="COQ10p_like"/>
    <property type="match status" value="1"/>
</dbReference>
<dbReference type="FunFam" id="3.30.530.20:FF:000061">
    <property type="entry name" value="Ribosome association toxin RatA"/>
    <property type="match status" value="1"/>
</dbReference>
<dbReference type="Gene3D" id="3.30.530.20">
    <property type="match status" value="1"/>
</dbReference>
<dbReference type="InterPro" id="IPR044996">
    <property type="entry name" value="COQ10-like"/>
</dbReference>
<dbReference type="InterPro" id="IPR005031">
    <property type="entry name" value="COQ10_START"/>
</dbReference>
<dbReference type="InterPro" id="IPR023393">
    <property type="entry name" value="START-like_dom_sf"/>
</dbReference>
<dbReference type="PANTHER" id="PTHR12901:SF10">
    <property type="entry name" value="COENZYME Q-BINDING PROTEIN COQ10, MITOCHONDRIAL"/>
    <property type="match status" value="1"/>
</dbReference>
<dbReference type="PANTHER" id="PTHR12901">
    <property type="entry name" value="SPERM PROTEIN HOMOLOG"/>
    <property type="match status" value="1"/>
</dbReference>
<dbReference type="Pfam" id="PF03364">
    <property type="entry name" value="Polyketide_cyc"/>
    <property type="match status" value="1"/>
</dbReference>
<dbReference type="SUPFAM" id="SSF55961">
    <property type="entry name" value="Bet v1-like"/>
    <property type="match status" value="1"/>
</dbReference>
<feature type="chain" id="PRO_0000192476" description="Ribosome association toxin RatA">
    <location>
        <begin position="1"/>
        <end position="144"/>
    </location>
</feature>
<accession>O68560</accession>
<organism>
    <name type="scientific">Pseudomonas aeruginosa (strain ATCC 15692 / DSM 22644 / CIP 104116 / JCM 14847 / LMG 12228 / 1C / PRS 101 / PAO1)</name>
    <dbReference type="NCBI Taxonomy" id="208964"/>
    <lineage>
        <taxon>Bacteria</taxon>
        <taxon>Pseudomonadati</taxon>
        <taxon>Pseudomonadota</taxon>
        <taxon>Gammaproteobacteria</taxon>
        <taxon>Pseudomonadales</taxon>
        <taxon>Pseudomonadaceae</taxon>
        <taxon>Pseudomonas</taxon>
    </lineage>
</organism>
<proteinExistence type="inferred from homology"/>
<gene>
    <name type="primary">ratA</name>
    <name type="ordered locus">PA4767</name>
</gene>
<keyword id="KW-1185">Reference proteome</keyword>
<keyword id="KW-1277">Toxin-antitoxin system</keyword>
<sequence>MSTHIQRSALLPYPARALFDLVNDVKRYPEFLPWCSASQVLEESESLMRAELTVAKGSLSQRFTTRNVLVPGASIEMNLENGPFTELHGVWQFKALGEKACKITLDLTFDYAGPLVKATLGPLFTQAANTMVDAFCQRAKQLYG</sequence>